<organism>
    <name type="scientific">Actinobacillus pleuropneumoniae serotype 5b (strain L20)</name>
    <dbReference type="NCBI Taxonomy" id="416269"/>
    <lineage>
        <taxon>Bacteria</taxon>
        <taxon>Pseudomonadati</taxon>
        <taxon>Pseudomonadota</taxon>
        <taxon>Gammaproteobacteria</taxon>
        <taxon>Pasteurellales</taxon>
        <taxon>Pasteurellaceae</taxon>
        <taxon>Actinobacillus</taxon>
    </lineage>
</organism>
<dbReference type="EC" id="4.2.1.33" evidence="1"/>
<dbReference type="EMBL" id="CP000569">
    <property type="protein sequence ID" value="ABN73246.1"/>
    <property type="molecule type" value="Genomic_DNA"/>
</dbReference>
<dbReference type="RefSeq" id="WP_009875072.1">
    <property type="nucleotide sequence ID" value="NC_009053.1"/>
</dbReference>
<dbReference type="SMR" id="A3MYL0"/>
<dbReference type="STRING" id="416269.APL_0138"/>
<dbReference type="EnsemblBacteria" id="ABN73246">
    <property type="protein sequence ID" value="ABN73246"/>
    <property type="gene ID" value="APL_0138"/>
</dbReference>
<dbReference type="KEGG" id="apl:APL_0138"/>
<dbReference type="PATRIC" id="fig|416269.6.peg.142"/>
<dbReference type="eggNOG" id="COG0066">
    <property type="taxonomic scope" value="Bacteria"/>
</dbReference>
<dbReference type="HOGENOM" id="CLU_081378_0_3_6"/>
<dbReference type="UniPathway" id="UPA00048">
    <property type="reaction ID" value="UER00071"/>
</dbReference>
<dbReference type="Proteomes" id="UP000001432">
    <property type="component" value="Chromosome"/>
</dbReference>
<dbReference type="GO" id="GO:0009316">
    <property type="term" value="C:3-isopropylmalate dehydratase complex"/>
    <property type="evidence" value="ECO:0007669"/>
    <property type="project" value="InterPro"/>
</dbReference>
<dbReference type="GO" id="GO:0003861">
    <property type="term" value="F:3-isopropylmalate dehydratase activity"/>
    <property type="evidence" value="ECO:0007669"/>
    <property type="project" value="UniProtKB-UniRule"/>
</dbReference>
<dbReference type="GO" id="GO:0009098">
    <property type="term" value="P:L-leucine biosynthetic process"/>
    <property type="evidence" value="ECO:0007669"/>
    <property type="project" value="UniProtKB-UniRule"/>
</dbReference>
<dbReference type="CDD" id="cd01577">
    <property type="entry name" value="IPMI_Swivel"/>
    <property type="match status" value="1"/>
</dbReference>
<dbReference type="FunFam" id="3.20.19.10:FF:000003">
    <property type="entry name" value="3-isopropylmalate dehydratase small subunit"/>
    <property type="match status" value="1"/>
</dbReference>
<dbReference type="Gene3D" id="3.20.19.10">
    <property type="entry name" value="Aconitase, domain 4"/>
    <property type="match status" value="1"/>
</dbReference>
<dbReference type="HAMAP" id="MF_01031">
    <property type="entry name" value="LeuD_type1"/>
    <property type="match status" value="1"/>
</dbReference>
<dbReference type="InterPro" id="IPR004431">
    <property type="entry name" value="3-IsopropMal_deHydase_ssu"/>
</dbReference>
<dbReference type="InterPro" id="IPR015928">
    <property type="entry name" value="Aconitase/3IPM_dehydase_swvl"/>
</dbReference>
<dbReference type="InterPro" id="IPR000573">
    <property type="entry name" value="AconitaseA/IPMdHydase_ssu_swvl"/>
</dbReference>
<dbReference type="InterPro" id="IPR033940">
    <property type="entry name" value="IPMI_Swivel"/>
</dbReference>
<dbReference type="InterPro" id="IPR050075">
    <property type="entry name" value="LeuD"/>
</dbReference>
<dbReference type="NCBIfam" id="TIGR00171">
    <property type="entry name" value="leuD"/>
    <property type="match status" value="1"/>
</dbReference>
<dbReference type="NCBIfam" id="NF002458">
    <property type="entry name" value="PRK01641.1"/>
    <property type="match status" value="1"/>
</dbReference>
<dbReference type="PANTHER" id="PTHR43345:SF5">
    <property type="entry name" value="3-ISOPROPYLMALATE DEHYDRATASE SMALL SUBUNIT"/>
    <property type="match status" value="1"/>
</dbReference>
<dbReference type="PANTHER" id="PTHR43345">
    <property type="entry name" value="3-ISOPROPYLMALATE DEHYDRATASE SMALL SUBUNIT 2-RELATED-RELATED"/>
    <property type="match status" value="1"/>
</dbReference>
<dbReference type="Pfam" id="PF00694">
    <property type="entry name" value="Aconitase_C"/>
    <property type="match status" value="1"/>
</dbReference>
<dbReference type="SUPFAM" id="SSF52016">
    <property type="entry name" value="LeuD/IlvD-like"/>
    <property type="match status" value="1"/>
</dbReference>
<keyword id="KW-0028">Amino-acid biosynthesis</keyword>
<keyword id="KW-0100">Branched-chain amino acid biosynthesis</keyword>
<keyword id="KW-0432">Leucine biosynthesis</keyword>
<keyword id="KW-0456">Lyase</keyword>
<keyword id="KW-1185">Reference proteome</keyword>
<name>LEUD_ACTP2</name>
<comment type="function">
    <text evidence="1">Catalyzes the isomerization between 2-isopropylmalate and 3-isopropylmalate, via the formation of 2-isopropylmaleate.</text>
</comment>
<comment type="catalytic activity">
    <reaction evidence="1">
        <text>(2R,3S)-3-isopropylmalate = (2S)-2-isopropylmalate</text>
        <dbReference type="Rhea" id="RHEA:32287"/>
        <dbReference type="ChEBI" id="CHEBI:1178"/>
        <dbReference type="ChEBI" id="CHEBI:35121"/>
        <dbReference type="EC" id="4.2.1.33"/>
    </reaction>
</comment>
<comment type="pathway">
    <text evidence="1">Amino-acid biosynthesis; L-leucine biosynthesis; L-leucine from 3-methyl-2-oxobutanoate: step 2/4.</text>
</comment>
<comment type="subunit">
    <text evidence="1">Heterodimer of LeuC and LeuD.</text>
</comment>
<comment type="similarity">
    <text evidence="1">Belongs to the LeuD family. LeuD type 1 subfamily.</text>
</comment>
<sequence>MAGLKQHSGLVVPLDAANVDTDAIIPKQFLQAITRVGFGKHLFHEWRYLDAEETRLNPDFVLNFPQYQGATILLTRKNLGCGSSREHAPWALADYGFKVMIAPSFADIFYNNSLNNHMLPIRLSEEEVEEIFQWVWANEGKQIHIDLEAMTVTVGDKIYRFELDEFRRHCLLNGLDNIGLTLQHEDAITAYESKIPAFLR</sequence>
<evidence type="ECO:0000255" key="1">
    <source>
        <dbReference type="HAMAP-Rule" id="MF_01031"/>
    </source>
</evidence>
<gene>
    <name evidence="1" type="primary">leuD</name>
    <name type="ordered locus">APL_0138</name>
</gene>
<reference key="1">
    <citation type="journal article" date="2008" name="J. Bacteriol.">
        <title>The complete genome sequence of Actinobacillus pleuropneumoniae L20 (serotype 5b).</title>
        <authorList>
            <person name="Foote S.J."/>
            <person name="Bosse J.T."/>
            <person name="Bouevitch A.B."/>
            <person name="Langford P.R."/>
            <person name="Young N.M."/>
            <person name="Nash J.H.E."/>
        </authorList>
    </citation>
    <scope>NUCLEOTIDE SEQUENCE [LARGE SCALE GENOMIC DNA]</scope>
    <source>
        <strain>L20</strain>
    </source>
</reference>
<accession>A3MYL0</accession>
<protein>
    <recommendedName>
        <fullName evidence="1">3-isopropylmalate dehydratase small subunit</fullName>
        <ecNumber evidence="1">4.2.1.33</ecNumber>
    </recommendedName>
    <alternativeName>
        <fullName evidence="1">Alpha-IPM isomerase</fullName>
        <shortName evidence="1">IPMI</shortName>
    </alternativeName>
    <alternativeName>
        <fullName evidence="1">Isopropylmalate isomerase</fullName>
    </alternativeName>
</protein>
<feature type="chain" id="PRO_1000063723" description="3-isopropylmalate dehydratase small subunit">
    <location>
        <begin position="1"/>
        <end position="200"/>
    </location>
</feature>
<proteinExistence type="inferred from homology"/>